<organism>
    <name type="scientific">Deinococcus deserti (strain DSM 17065 / CIP 109153 / LMG 22923 / VCD115)</name>
    <dbReference type="NCBI Taxonomy" id="546414"/>
    <lineage>
        <taxon>Bacteria</taxon>
        <taxon>Thermotogati</taxon>
        <taxon>Deinococcota</taxon>
        <taxon>Deinococci</taxon>
        <taxon>Deinococcales</taxon>
        <taxon>Deinococcaceae</taxon>
        <taxon>Deinococcus</taxon>
    </lineage>
</organism>
<comment type="function">
    <text evidence="1">Catalyzes the pyruvoyl-dependent decarboxylation of aspartate to produce beta-alanine.</text>
</comment>
<comment type="catalytic activity">
    <reaction evidence="1">
        <text>L-aspartate + H(+) = beta-alanine + CO2</text>
        <dbReference type="Rhea" id="RHEA:19497"/>
        <dbReference type="ChEBI" id="CHEBI:15378"/>
        <dbReference type="ChEBI" id="CHEBI:16526"/>
        <dbReference type="ChEBI" id="CHEBI:29991"/>
        <dbReference type="ChEBI" id="CHEBI:57966"/>
        <dbReference type="EC" id="4.1.1.11"/>
    </reaction>
</comment>
<comment type="cofactor">
    <cofactor evidence="1">
        <name>pyruvate</name>
        <dbReference type="ChEBI" id="CHEBI:15361"/>
    </cofactor>
    <text evidence="1">Binds 1 pyruvoyl group covalently per subunit.</text>
</comment>
<comment type="pathway">
    <text evidence="1">Cofactor biosynthesis; (R)-pantothenate biosynthesis; beta-alanine from L-aspartate: step 1/1.</text>
</comment>
<comment type="subunit">
    <text evidence="1">Heterooctamer of four alpha and four beta subunits.</text>
</comment>
<comment type="subcellular location">
    <subcellularLocation>
        <location evidence="1">Cytoplasm</location>
    </subcellularLocation>
</comment>
<comment type="PTM">
    <text evidence="1">Is synthesized initially as an inactive proenzyme, which is activated by self-cleavage at a specific serine bond to produce a beta-subunit with a hydroxyl group at its C-terminus and an alpha-subunit with a pyruvoyl group at its N-terminus.</text>
</comment>
<comment type="similarity">
    <text evidence="1">Belongs to the PanD family.</text>
</comment>
<evidence type="ECO:0000255" key="1">
    <source>
        <dbReference type="HAMAP-Rule" id="MF_00446"/>
    </source>
</evidence>
<feature type="chain" id="PRO_1000206170" description="Aspartate 1-decarboxylase beta chain" evidence="1">
    <location>
        <begin position="1"/>
        <end position="24"/>
    </location>
</feature>
<feature type="chain" id="PRO_1000206171" description="Aspartate 1-decarboxylase alpha chain" evidence="1">
    <location>
        <begin position="25"/>
        <end position="120"/>
    </location>
</feature>
<feature type="active site" description="Schiff-base intermediate with substrate; via pyruvic acid" evidence="1">
    <location>
        <position position="25"/>
    </location>
</feature>
<feature type="active site" description="Proton donor" evidence="1">
    <location>
        <position position="58"/>
    </location>
</feature>
<feature type="binding site" evidence="1">
    <location>
        <position position="57"/>
    </location>
    <ligand>
        <name>substrate</name>
    </ligand>
</feature>
<feature type="binding site" evidence="1">
    <location>
        <begin position="73"/>
        <end position="75"/>
    </location>
    <ligand>
        <name>substrate</name>
    </ligand>
</feature>
<feature type="modified residue" description="Pyruvic acid (Ser)" evidence="1">
    <location>
        <position position="25"/>
    </location>
</feature>
<protein>
    <recommendedName>
        <fullName evidence="1">Aspartate 1-decarboxylase</fullName>
        <ecNumber evidence="1">4.1.1.11</ecNumber>
    </recommendedName>
    <alternativeName>
        <fullName evidence="1">Aspartate alpha-decarboxylase</fullName>
    </alternativeName>
    <component>
        <recommendedName>
            <fullName evidence="1">Aspartate 1-decarboxylase beta chain</fullName>
        </recommendedName>
    </component>
    <component>
        <recommendedName>
            <fullName evidence="1">Aspartate 1-decarboxylase alpha chain</fullName>
        </recommendedName>
    </component>
</protein>
<proteinExistence type="inferred from homology"/>
<keyword id="KW-0068">Autocatalytic cleavage</keyword>
<keyword id="KW-0963">Cytoplasm</keyword>
<keyword id="KW-0210">Decarboxylase</keyword>
<keyword id="KW-0456">Lyase</keyword>
<keyword id="KW-0566">Pantothenate biosynthesis</keyword>
<keyword id="KW-0670">Pyruvate</keyword>
<keyword id="KW-1185">Reference proteome</keyword>
<keyword id="KW-0704">Schiff base</keyword>
<keyword id="KW-0865">Zymogen</keyword>
<gene>
    <name evidence="1" type="primary">panD</name>
    <name type="ordered locus">Deide_08220</name>
</gene>
<name>PAND_DEIDV</name>
<dbReference type="EC" id="4.1.1.11" evidence="1"/>
<dbReference type="EMBL" id="CP001114">
    <property type="protein sequence ID" value="ACO45690.1"/>
    <property type="molecule type" value="Genomic_DNA"/>
</dbReference>
<dbReference type="RefSeq" id="WP_012692813.1">
    <property type="nucleotide sequence ID" value="NC_012526.1"/>
</dbReference>
<dbReference type="SMR" id="C1D1G6"/>
<dbReference type="STRING" id="546414.Deide_08220"/>
<dbReference type="PaxDb" id="546414-Deide_08220"/>
<dbReference type="KEGG" id="ddr:Deide_08220"/>
<dbReference type="eggNOG" id="COG0853">
    <property type="taxonomic scope" value="Bacteria"/>
</dbReference>
<dbReference type="HOGENOM" id="CLU_115305_2_1_0"/>
<dbReference type="UniPathway" id="UPA00028">
    <property type="reaction ID" value="UER00002"/>
</dbReference>
<dbReference type="Proteomes" id="UP000002208">
    <property type="component" value="Chromosome"/>
</dbReference>
<dbReference type="GO" id="GO:0005829">
    <property type="term" value="C:cytosol"/>
    <property type="evidence" value="ECO:0007669"/>
    <property type="project" value="TreeGrafter"/>
</dbReference>
<dbReference type="GO" id="GO:0004068">
    <property type="term" value="F:aspartate 1-decarboxylase activity"/>
    <property type="evidence" value="ECO:0007669"/>
    <property type="project" value="UniProtKB-UniRule"/>
</dbReference>
<dbReference type="GO" id="GO:0006523">
    <property type="term" value="P:alanine biosynthetic process"/>
    <property type="evidence" value="ECO:0007669"/>
    <property type="project" value="InterPro"/>
</dbReference>
<dbReference type="GO" id="GO:0015940">
    <property type="term" value="P:pantothenate biosynthetic process"/>
    <property type="evidence" value="ECO:0007669"/>
    <property type="project" value="UniProtKB-UniRule"/>
</dbReference>
<dbReference type="CDD" id="cd06919">
    <property type="entry name" value="Asp_decarbox"/>
    <property type="match status" value="1"/>
</dbReference>
<dbReference type="Gene3D" id="2.40.40.20">
    <property type="match status" value="1"/>
</dbReference>
<dbReference type="HAMAP" id="MF_00446">
    <property type="entry name" value="PanD"/>
    <property type="match status" value="1"/>
</dbReference>
<dbReference type="InterPro" id="IPR009010">
    <property type="entry name" value="Asp_de-COase-like_dom_sf"/>
</dbReference>
<dbReference type="InterPro" id="IPR003190">
    <property type="entry name" value="Asp_decarbox"/>
</dbReference>
<dbReference type="NCBIfam" id="TIGR00223">
    <property type="entry name" value="panD"/>
    <property type="match status" value="1"/>
</dbReference>
<dbReference type="PANTHER" id="PTHR21012">
    <property type="entry name" value="ASPARTATE 1-DECARBOXYLASE"/>
    <property type="match status" value="1"/>
</dbReference>
<dbReference type="PANTHER" id="PTHR21012:SF0">
    <property type="entry name" value="ASPARTATE 1-DECARBOXYLASE"/>
    <property type="match status" value="1"/>
</dbReference>
<dbReference type="Pfam" id="PF02261">
    <property type="entry name" value="Asp_decarbox"/>
    <property type="match status" value="1"/>
</dbReference>
<dbReference type="PIRSF" id="PIRSF006246">
    <property type="entry name" value="Asp_decarbox"/>
    <property type="match status" value="1"/>
</dbReference>
<dbReference type="SUPFAM" id="SSF50692">
    <property type="entry name" value="ADC-like"/>
    <property type="match status" value="1"/>
</dbReference>
<reference key="1">
    <citation type="journal article" date="2009" name="PLoS Genet.">
        <title>Alliance of proteomics and genomics to unravel the specificities of Sahara bacterium Deinococcus deserti.</title>
        <authorList>
            <person name="de Groot A."/>
            <person name="Dulermo R."/>
            <person name="Ortet P."/>
            <person name="Blanchard L."/>
            <person name="Guerin P."/>
            <person name="Fernandez B."/>
            <person name="Vacherie B."/>
            <person name="Dossat C."/>
            <person name="Jolivet E."/>
            <person name="Siguier P."/>
            <person name="Chandler M."/>
            <person name="Barakat M."/>
            <person name="Dedieu A."/>
            <person name="Barbe V."/>
            <person name="Heulin T."/>
            <person name="Sommer S."/>
            <person name="Achouak W."/>
            <person name="Armengaud J."/>
        </authorList>
    </citation>
    <scope>NUCLEOTIDE SEQUENCE [LARGE SCALE GENOMIC DNA]</scope>
    <source>
        <strain>DSM 17065 / CIP 109153 / LMG 22923 / VCD115</strain>
    </source>
</reference>
<sequence>MERIMFRAKIHRATVTQADLDYVGSVTIDQDLLDAADILVNEKVDIWNITNGNRLHTYALSGPRGSGVIGINGAAAHLMRPGDMVIIAAFGNFTEEEARVLEPKVVLVDARNRLLELEPA</sequence>
<accession>C1D1G6</accession>